<sequence>MRFLLGVLMLMISGSALATIDVLQFKDEAQEQQFRQLTEELRCPKCQNNSIADSNSMIATDLRQKVYELMQEGKSKKEIVDYMVARYGNFVTYDPPLTPLTVLLWVLPVVAIGIGGWVIYARSRRRVRVVPEAFPEQSVPEGKRAGYVVYLPGIVVALIVAGVSYYQTGNYQQVKIWQQATAQAPALLDRALDPKADPLNEEEMSRLALGMRTQLQKNPGDIEGWIMLGRVGMALGNASIATDAYATAYRLDPKNSDAALGYAEALTRSSDPNDNRLGGELLRQLVRTDHSNIRVLSMYAFNAFEQQRFGEAVAAWEMMLKLLPANDTRRAVIERSIAQAMQHLSPQESK</sequence>
<protein>
    <recommendedName>
        <fullName>Cytochrome c-type biogenesis protein CcmH</fullName>
    </recommendedName>
</protein>
<comment type="function">
    <text>May be required for the biogenesis of c-type cytochromes. Possible subunit of a heme lyase.</text>
</comment>
<comment type="interaction">
    <interactant intactId="EBI-560309">
        <id>P0ABM9</id>
    </interactant>
    <interactant intactId="EBI-763370">
        <id>P33927</id>
        <label>ccmF</label>
    </interactant>
    <organismsDiffer>false</organismsDiffer>
    <experiments>3</experiments>
</comment>
<comment type="subcellular location">
    <subcellularLocation>
        <location>Cell inner membrane</location>
        <topology>Multi-pass membrane protein</topology>
    </subcellularLocation>
</comment>
<comment type="similarity">
    <text evidence="2">Belongs to the CcmH/CycL/Ccl2/NrfF family.</text>
</comment>
<dbReference type="EMBL" id="U00008">
    <property type="protein sequence ID" value="AAA16386.1"/>
    <property type="molecule type" value="Genomic_DNA"/>
</dbReference>
<dbReference type="EMBL" id="U00096">
    <property type="protein sequence ID" value="AAC75254.1"/>
    <property type="molecule type" value="Genomic_DNA"/>
</dbReference>
<dbReference type="EMBL" id="AP009048">
    <property type="protein sequence ID" value="BAE76657.1"/>
    <property type="molecule type" value="Genomic_DNA"/>
</dbReference>
<dbReference type="PIR" id="H64988">
    <property type="entry name" value="H64988"/>
</dbReference>
<dbReference type="RefSeq" id="NP_416698.1">
    <property type="nucleotide sequence ID" value="NC_000913.3"/>
</dbReference>
<dbReference type="RefSeq" id="WP_001211575.1">
    <property type="nucleotide sequence ID" value="NZ_STEB01000002.1"/>
</dbReference>
<dbReference type="BMRB" id="P0ABM9"/>
<dbReference type="SMR" id="P0ABM9"/>
<dbReference type="BioGRID" id="4260481">
    <property type="interactions" value="14"/>
</dbReference>
<dbReference type="ComplexPortal" id="CPX-3569">
    <property type="entry name" value="CcmFH system I cytochrome c biogenesis complex"/>
</dbReference>
<dbReference type="DIP" id="DIP-48146N"/>
<dbReference type="FunCoup" id="P0ABM9">
    <property type="interactions" value="86"/>
</dbReference>
<dbReference type="IntAct" id="P0ABM9">
    <property type="interactions" value="5"/>
</dbReference>
<dbReference type="MINT" id="P0ABM9"/>
<dbReference type="STRING" id="511145.b2194"/>
<dbReference type="jPOST" id="P0ABM9"/>
<dbReference type="PaxDb" id="511145-b2194"/>
<dbReference type="EnsemblBacteria" id="AAC75254">
    <property type="protein sequence ID" value="AAC75254"/>
    <property type="gene ID" value="b2194"/>
</dbReference>
<dbReference type="GeneID" id="75172321"/>
<dbReference type="GeneID" id="946623"/>
<dbReference type="KEGG" id="ecj:JW2182"/>
<dbReference type="KEGG" id="eco:b2194"/>
<dbReference type="KEGG" id="ecoc:C3026_12265"/>
<dbReference type="PATRIC" id="fig|1411691.4.peg.42"/>
<dbReference type="EchoBASE" id="EB1983"/>
<dbReference type="eggNOG" id="COG3088">
    <property type="taxonomic scope" value="Bacteria"/>
</dbReference>
<dbReference type="eggNOG" id="COG4235">
    <property type="taxonomic scope" value="Bacteria"/>
</dbReference>
<dbReference type="HOGENOM" id="CLU_036074_0_0_6"/>
<dbReference type="InParanoid" id="P0ABM9"/>
<dbReference type="OMA" id="AISAWQM"/>
<dbReference type="OrthoDB" id="9776053at2"/>
<dbReference type="PhylomeDB" id="P0ABM9"/>
<dbReference type="BioCyc" id="EcoCyc:EG12052-MONOMER"/>
<dbReference type="BioCyc" id="MetaCyc:EG12052-MONOMER"/>
<dbReference type="PRO" id="PR:P0ABM9"/>
<dbReference type="Proteomes" id="UP000000625">
    <property type="component" value="Chromosome"/>
</dbReference>
<dbReference type="GO" id="GO:0005886">
    <property type="term" value="C:plasma membrane"/>
    <property type="evidence" value="ECO:0000314"/>
    <property type="project" value="EcoCyc"/>
</dbReference>
<dbReference type="GO" id="GO:0046872">
    <property type="term" value="F:metal ion binding"/>
    <property type="evidence" value="ECO:0007669"/>
    <property type="project" value="UniProtKB-KW"/>
</dbReference>
<dbReference type="GO" id="GO:0015035">
    <property type="term" value="F:protein-disulfide reductase activity"/>
    <property type="evidence" value="ECO:0000255"/>
    <property type="project" value="EcoCyc"/>
</dbReference>
<dbReference type="GO" id="GO:0017004">
    <property type="term" value="P:cytochrome complex assembly"/>
    <property type="evidence" value="ECO:0000314"/>
    <property type="project" value="ComplexPortal"/>
</dbReference>
<dbReference type="CDD" id="cd16378">
    <property type="entry name" value="CcmH_N"/>
    <property type="match status" value="1"/>
</dbReference>
<dbReference type="FunFam" id="1.10.8.640:FF:000001">
    <property type="entry name" value="Cytochrome c-type biogenesis protein"/>
    <property type="match status" value="1"/>
</dbReference>
<dbReference type="FunFam" id="1.25.40.10:FF:000156">
    <property type="entry name" value="Cytochrome c-type biogenesis protein"/>
    <property type="match status" value="1"/>
</dbReference>
<dbReference type="Gene3D" id="1.10.8.640">
    <property type="entry name" value="Cytochrome C biogenesis protein"/>
    <property type="match status" value="1"/>
</dbReference>
<dbReference type="Gene3D" id="1.25.40.10">
    <property type="entry name" value="Tetratricopeptide repeat domain"/>
    <property type="match status" value="1"/>
</dbReference>
<dbReference type="InterPro" id="IPR051263">
    <property type="entry name" value="C-type_cytochrome_biogenesis"/>
</dbReference>
<dbReference type="InterPro" id="IPR005616">
    <property type="entry name" value="CcmH/CycL/Ccl2/NrfF_N"/>
</dbReference>
<dbReference type="InterPro" id="IPR038297">
    <property type="entry name" value="CcmH/CycL/NrfF/Ccl2_sf"/>
</dbReference>
<dbReference type="InterPro" id="IPR011990">
    <property type="entry name" value="TPR-like_helical_dom_sf"/>
</dbReference>
<dbReference type="InterPro" id="IPR056413">
    <property type="entry name" value="TPR_CcmH_CycH"/>
</dbReference>
<dbReference type="InterPro" id="IPR019734">
    <property type="entry name" value="TPR_rpt"/>
</dbReference>
<dbReference type="PANTHER" id="PTHR47870">
    <property type="entry name" value="CYTOCHROME C-TYPE BIOGENESIS PROTEIN CCMH"/>
    <property type="match status" value="1"/>
</dbReference>
<dbReference type="PANTHER" id="PTHR47870:SF1">
    <property type="entry name" value="CYTOCHROME C-TYPE BIOGENESIS PROTEIN CCMH"/>
    <property type="match status" value="1"/>
</dbReference>
<dbReference type="Pfam" id="PF03918">
    <property type="entry name" value="CcmH"/>
    <property type="match status" value="1"/>
</dbReference>
<dbReference type="Pfam" id="PF23914">
    <property type="entry name" value="TPR_CcmH_CycH"/>
    <property type="match status" value="1"/>
</dbReference>
<dbReference type="SUPFAM" id="SSF48452">
    <property type="entry name" value="TPR-like"/>
    <property type="match status" value="1"/>
</dbReference>
<dbReference type="PROSITE" id="PS50005">
    <property type="entry name" value="TPR"/>
    <property type="match status" value="2"/>
</dbReference>
<dbReference type="PROSITE" id="PS50293">
    <property type="entry name" value="TPR_REGION"/>
    <property type="match status" value="1"/>
</dbReference>
<accession>P0ABM9</accession>
<accession>P33925</accession>
<accession>Q2MAP9</accession>
<organism>
    <name type="scientific">Escherichia coli (strain K12)</name>
    <dbReference type="NCBI Taxonomy" id="83333"/>
    <lineage>
        <taxon>Bacteria</taxon>
        <taxon>Pseudomonadati</taxon>
        <taxon>Pseudomonadota</taxon>
        <taxon>Gammaproteobacteria</taxon>
        <taxon>Enterobacterales</taxon>
        <taxon>Enterobacteriaceae</taxon>
        <taxon>Escherichia</taxon>
    </lineage>
</organism>
<proteinExistence type="evidence at protein level"/>
<name>CCMH_ECOLI</name>
<gene>
    <name type="primary">ccmH</name>
    <name type="synonym">yejP</name>
    <name type="ordered locus">b2194</name>
    <name type="ordered locus">JW2182</name>
</gene>
<feature type="signal peptide" evidence="1">
    <location>
        <begin position="1"/>
        <end position="18"/>
    </location>
</feature>
<feature type="chain" id="PRO_0000006612" description="Cytochrome c-type biogenesis protein CcmH">
    <location>
        <begin position="19"/>
        <end position="350"/>
    </location>
</feature>
<feature type="topological domain" description="Periplasmic" evidence="1">
    <location>
        <begin position="19"/>
        <end position="96"/>
    </location>
</feature>
<feature type="transmembrane region" description="Helical" evidence="1">
    <location>
        <begin position="97"/>
        <end position="119"/>
    </location>
</feature>
<feature type="topological domain" description="Cytoplasmic" evidence="1">
    <location>
        <begin position="120"/>
        <end position="146"/>
    </location>
</feature>
<feature type="transmembrane region" description="Helical" evidence="1">
    <location>
        <begin position="147"/>
        <end position="169"/>
    </location>
</feature>
<feature type="topological domain" description="Periplasmic" evidence="1">
    <location>
        <begin position="170"/>
        <end position="350"/>
    </location>
</feature>
<feature type="repeat" description="TPR 1">
    <location>
        <begin position="222"/>
        <end position="255"/>
    </location>
</feature>
<feature type="repeat" description="TPR 2">
    <location>
        <begin position="293"/>
        <end position="326"/>
    </location>
</feature>
<feature type="binding site" description="covalent" evidence="1">
    <location>
        <position position="43"/>
    </location>
    <ligand>
        <name>heme</name>
        <dbReference type="ChEBI" id="CHEBI:30413"/>
    </ligand>
</feature>
<feature type="binding site" description="covalent" evidence="1">
    <location>
        <position position="46"/>
    </location>
    <ligand>
        <name>heme</name>
        <dbReference type="ChEBI" id="CHEBI:30413"/>
    </ligand>
</feature>
<reference key="1">
    <citation type="submission" date="1993-10" db="EMBL/GenBank/DDBJ databases">
        <authorList>
            <person name="Richterich P."/>
            <person name="Lakey N."/>
            <person name="Gryan G."/>
            <person name="Jaehn L."/>
            <person name="Mintz L."/>
            <person name="Robison K."/>
            <person name="Church G.M."/>
        </authorList>
    </citation>
    <scope>NUCLEOTIDE SEQUENCE [GENOMIC DNA]</scope>
    <source>
        <strain>K12 / BHB2600</strain>
    </source>
</reference>
<reference key="2">
    <citation type="journal article" date="1997" name="Science">
        <title>The complete genome sequence of Escherichia coli K-12.</title>
        <authorList>
            <person name="Blattner F.R."/>
            <person name="Plunkett G. III"/>
            <person name="Bloch C.A."/>
            <person name="Perna N.T."/>
            <person name="Burland V."/>
            <person name="Riley M."/>
            <person name="Collado-Vides J."/>
            <person name="Glasner J.D."/>
            <person name="Rode C.K."/>
            <person name="Mayhew G.F."/>
            <person name="Gregor J."/>
            <person name="Davis N.W."/>
            <person name="Kirkpatrick H.A."/>
            <person name="Goeden M.A."/>
            <person name="Rose D.J."/>
            <person name="Mau B."/>
            <person name="Shao Y."/>
        </authorList>
    </citation>
    <scope>NUCLEOTIDE SEQUENCE [LARGE SCALE GENOMIC DNA]</scope>
    <source>
        <strain>K12 / MG1655 / ATCC 47076</strain>
    </source>
</reference>
<reference key="3">
    <citation type="journal article" date="2006" name="Mol. Syst. Biol.">
        <title>Highly accurate genome sequences of Escherichia coli K-12 strains MG1655 and W3110.</title>
        <authorList>
            <person name="Hayashi K."/>
            <person name="Morooka N."/>
            <person name="Yamamoto Y."/>
            <person name="Fujita K."/>
            <person name="Isono K."/>
            <person name="Choi S."/>
            <person name="Ohtsubo E."/>
            <person name="Baba T."/>
            <person name="Wanner B.L."/>
            <person name="Mori H."/>
            <person name="Horiuchi T."/>
        </authorList>
    </citation>
    <scope>NUCLEOTIDE SEQUENCE [LARGE SCALE GENOMIC DNA]</scope>
    <source>
        <strain>K12 / W3110 / ATCC 27325 / DSM 5911</strain>
    </source>
</reference>
<reference key="4">
    <citation type="journal article" date="1995" name="J. Bacteriol.">
        <title>Escherichia coli genes required for cytochrome c maturation.</title>
        <authorList>
            <person name="Thoeny-Meyer L."/>
            <person name="Fischer F."/>
            <person name="Kunzler P."/>
            <person name="Ritz D."/>
            <person name="Hennecke H."/>
        </authorList>
    </citation>
    <scope>CHARACTERIZATION</scope>
    <scope>GENE NAME</scope>
</reference>
<reference key="5">
    <citation type="journal article" date="2005" name="Science">
        <title>Global topology analysis of the Escherichia coli inner membrane proteome.</title>
        <authorList>
            <person name="Daley D.O."/>
            <person name="Rapp M."/>
            <person name="Granseth E."/>
            <person name="Melen K."/>
            <person name="Drew D."/>
            <person name="von Heijne G."/>
        </authorList>
    </citation>
    <scope>TOPOLOGY [LARGE SCALE ANALYSIS]</scope>
    <source>
        <strain>K12 / MG1655 / ATCC 47076</strain>
    </source>
</reference>
<keyword id="KW-0997">Cell inner membrane</keyword>
<keyword id="KW-1003">Cell membrane</keyword>
<keyword id="KW-0201">Cytochrome c-type biogenesis</keyword>
<keyword id="KW-0349">Heme</keyword>
<keyword id="KW-0408">Iron</keyword>
<keyword id="KW-0472">Membrane</keyword>
<keyword id="KW-0479">Metal-binding</keyword>
<keyword id="KW-1185">Reference proteome</keyword>
<keyword id="KW-0677">Repeat</keyword>
<keyword id="KW-0732">Signal</keyword>
<keyword id="KW-0802">TPR repeat</keyword>
<keyword id="KW-0812">Transmembrane</keyword>
<keyword id="KW-1133">Transmembrane helix</keyword>
<evidence type="ECO:0000255" key="1"/>
<evidence type="ECO:0000305" key="2"/>